<proteinExistence type="inferred from homology"/>
<comment type="function">
    <text evidence="1">Catalyzes the conversion of AMP and phosphate to adenine and ribose 1,5-bisphosphate (R15P). Exhibits phosphorylase activity toward CMP and UMP in addition to AMP. Functions in an archaeal AMP degradation pathway, together with R15P isomerase and RubisCO.</text>
</comment>
<comment type="catalytic activity">
    <reaction evidence="1">
        <text>AMP + phosphate = alpha-D-ribose 1,5-bisphosphate + adenine</text>
        <dbReference type="Rhea" id="RHEA:36975"/>
        <dbReference type="ChEBI" id="CHEBI:16708"/>
        <dbReference type="ChEBI" id="CHEBI:43474"/>
        <dbReference type="ChEBI" id="CHEBI:68688"/>
        <dbReference type="ChEBI" id="CHEBI:456215"/>
        <dbReference type="EC" id="2.4.2.57"/>
    </reaction>
</comment>
<comment type="catalytic activity">
    <reaction evidence="1">
        <text>CMP + phosphate = cytosine + alpha-D-ribose 1,5-bisphosphate</text>
        <dbReference type="Rhea" id="RHEA:36987"/>
        <dbReference type="ChEBI" id="CHEBI:16040"/>
        <dbReference type="ChEBI" id="CHEBI:43474"/>
        <dbReference type="ChEBI" id="CHEBI:60377"/>
        <dbReference type="ChEBI" id="CHEBI:68688"/>
        <dbReference type="EC" id="2.4.2.57"/>
    </reaction>
</comment>
<comment type="catalytic activity">
    <reaction evidence="1">
        <text>UMP + phosphate = alpha-D-ribose 1,5-bisphosphate + uracil</text>
        <dbReference type="Rhea" id="RHEA:36991"/>
        <dbReference type="ChEBI" id="CHEBI:17568"/>
        <dbReference type="ChEBI" id="CHEBI:43474"/>
        <dbReference type="ChEBI" id="CHEBI:57865"/>
        <dbReference type="ChEBI" id="CHEBI:68688"/>
        <dbReference type="EC" id="2.4.2.57"/>
    </reaction>
</comment>
<comment type="similarity">
    <text evidence="1">Belongs to the thymidine/pyrimidine-nucleoside phosphorylase family. Type 2 subfamily.</text>
</comment>
<dbReference type="EC" id="2.4.2.57" evidence="1"/>
<dbReference type="EMBL" id="CP000609">
    <property type="protein sequence ID" value="ABO35644.1"/>
    <property type="molecule type" value="Genomic_DNA"/>
</dbReference>
<dbReference type="RefSeq" id="WP_011869095.1">
    <property type="nucleotide sequence ID" value="NC_009135.1"/>
</dbReference>
<dbReference type="SMR" id="A4FZL0"/>
<dbReference type="STRING" id="402880.MmarC5_1346"/>
<dbReference type="GeneID" id="4927907"/>
<dbReference type="KEGG" id="mmq:MmarC5_1346"/>
<dbReference type="eggNOG" id="arCOG02013">
    <property type="taxonomic scope" value="Archaea"/>
</dbReference>
<dbReference type="HOGENOM" id="CLU_025040_6_0_2"/>
<dbReference type="OrthoDB" id="9827at2157"/>
<dbReference type="Proteomes" id="UP000000253">
    <property type="component" value="Chromosome"/>
</dbReference>
<dbReference type="GO" id="GO:0005829">
    <property type="term" value="C:cytosol"/>
    <property type="evidence" value="ECO:0007669"/>
    <property type="project" value="TreeGrafter"/>
</dbReference>
<dbReference type="GO" id="GO:0004645">
    <property type="term" value="F:1,4-alpha-oligoglucan phosphorylase activity"/>
    <property type="evidence" value="ECO:0007669"/>
    <property type="project" value="InterPro"/>
</dbReference>
<dbReference type="GO" id="GO:0016208">
    <property type="term" value="F:AMP binding"/>
    <property type="evidence" value="ECO:0007669"/>
    <property type="project" value="UniProtKB-UniRule"/>
</dbReference>
<dbReference type="GO" id="GO:0016763">
    <property type="term" value="F:pentosyltransferase activity"/>
    <property type="evidence" value="ECO:0007669"/>
    <property type="project" value="UniProtKB-UniRule"/>
</dbReference>
<dbReference type="GO" id="GO:0006196">
    <property type="term" value="P:AMP catabolic process"/>
    <property type="evidence" value="ECO:0007669"/>
    <property type="project" value="UniProtKB-UniRule"/>
</dbReference>
<dbReference type="GO" id="GO:0046125">
    <property type="term" value="P:pyrimidine deoxyribonucleoside metabolic process"/>
    <property type="evidence" value="ECO:0007669"/>
    <property type="project" value="InterPro"/>
</dbReference>
<dbReference type="GO" id="GO:0006206">
    <property type="term" value="P:pyrimidine nucleobase metabolic process"/>
    <property type="evidence" value="ECO:0007669"/>
    <property type="project" value="InterPro"/>
</dbReference>
<dbReference type="Gene3D" id="1.20.970.50">
    <property type="match status" value="1"/>
</dbReference>
<dbReference type="Gene3D" id="2.40.40.20">
    <property type="match status" value="1"/>
</dbReference>
<dbReference type="Gene3D" id="3.40.1030.10">
    <property type="entry name" value="Nucleoside phosphorylase/phosphoribosyltransferase catalytic domain"/>
    <property type="match status" value="1"/>
</dbReference>
<dbReference type="Gene3D" id="3.90.1170.30">
    <property type="entry name" value="Pyrimidine nucleoside phosphorylase-like, C-terminal domain"/>
    <property type="match status" value="1"/>
</dbReference>
<dbReference type="HAMAP" id="MF_02132">
    <property type="entry name" value="AMP_phosphorylase"/>
    <property type="match status" value="1"/>
</dbReference>
<dbReference type="InterPro" id="IPR017713">
    <property type="entry name" value="AMP_phosphorylase"/>
</dbReference>
<dbReference type="InterPro" id="IPR000312">
    <property type="entry name" value="Glycosyl_Trfase_fam3"/>
</dbReference>
<dbReference type="InterPro" id="IPR017459">
    <property type="entry name" value="Glycosyl_Trfase_fam3_N_dom"/>
</dbReference>
<dbReference type="InterPro" id="IPR036320">
    <property type="entry name" value="Glycosyl_Trfase_fam3_N_dom_sf"/>
</dbReference>
<dbReference type="InterPro" id="IPR035902">
    <property type="entry name" value="Nuc_phospho_transferase"/>
</dbReference>
<dbReference type="InterPro" id="IPR036566">
    <property type="entry name" value="PYNP-like_C_sf"/>
</dbReference>
<dbReference type="InterPro" id="IPR013102">
    <property type="entry name" value="PYNP_C"/>
</dbReference>
<dbReference type="InterPro" id="IPR017872">
    <property type="entry name" value="Pyrmidine_PPase_CS"/>
</dbReference>
<dbReference type="InterPro" id="IPR013466">
    <property type="entry name" value="Thymidine/AMP_Pase"/>
</dbReference>
<dbReference type="InterPro" id="IPR000053">
    <property type="entry name" value="Thymidine/pyrmidine_PPase"/>
</dbReference>
<dbReference type="NCBIfam" id="TIGR03327">
    <property type="entry name" value="AMP_phos"/>
    <property type="match status" value="1"/>
</dbReference>
<dbReference type="NCBIfam" id="TIGR02645">
    <property type="entry name" value="ARCH_P_rylase"/>
    <property type="match status" value="1"/>
</dbReference>
<dbReference type="NCBIfam" id="NF003338">
    <property type="entry name" value="PRK04350.1"/>
    <property type="match status" value="1"/>
</dbReference>
<dbReference type="PANTHER" id="PTHR10515">
    <property type="entry name" value="THYMIDINE PHOSPHORYLASE"/>
    <property type="match status" value="1"/>
</dbReference>
<dbReference type="PANTHER" id="PTHR10515:SF0">
    <property type="entry name" value="THYMIDINE PHOSPHORYLASE"/>
    <property type="match status" value="1"/>
</dbReference>
<dbReference type="Pfam" id="PF02885">
    <property type="entry name" value="Glycos_trans_3N"/>
    <property type="match status" value="1"/>
</dbReference>
<dbReference type="Pfam" id="PF00591">
    <property type="entry name" value="Glycos_transf_3"/>
    <property type="match status" value="1"/>
</dbReference>
<dbReference type="Pfam" id="PF07831">
    <property type="entry name" value="PYNP_C"/>
    <property type="match status" value="1"/>
</dbReference>
<dbReference type="PIRSF" id="PIRSF000478">
    <property type="entry name" value="TP_PyNP"/>
    <property type="match status" value="1"/>
</dbReference>
<dbReference type="SMART" id="SM00941">
    <property type="entry name" value="PYNP_C"/>
    <property type="match status" value="1"/>
</dbReference>
<dbReference type="SUPFAM" id="SSF52418">
    <property type="entry name" value="Nucleoside phosphorylase/phosphoribosyltransferase catalytic domain"/>
    <property type="match status" value="1"/>
</dbReference>
<dbReference type="SUPFAM" id="SSF47648">
    <property type="entry name" value="Nucleoside phosphorylase/phosphoribosyltransferase N-terminal domain"/>
    <property type="match status" value="1"/>
</dbReference>
<dbReference type="SUPFAM" id="SSF54680">
    <property type="entry name" value="Pyrimidine nucleoside phosphorylase C-terminal domain"/>
    <property type="match status" value="1"/>
</dbReference>
<dbReference type="PROSITE" id="PS00647">
    <property type="entry name" value="THYMID_PHOSPHORYLASE"/>
    <property type="match status" value="1"/>
</dbReference>
<gene>
    <name type="ordered locus">MmarC5_1346</name>
</gene>
<evidence type="ECO:0000255" key="1">
    <source>
        <dbReference type="HAMAP-Rule" id="MF_02132"/>
    </source>
</evidence>
<sequence>MLFLNAKFIDLDLGENAVIVNEEDLKGTSYYPQDRVLIESHAGSVIGNIYSTKTMVNKGEVGMLVSELAEISISEGEEVKLRHAEKPESIPFIKKKMDGQVLNPHEIRTIIDEIVSKKLSNIELSAFVSSTYINGMNMDEISEMTKRIAETGDMIAWEKSLVVDIHSIGGVPGNKYALLSIPILAAAGITVPKTSSRAITSPAGTADVMEVLTNVELKEEEIKRIVKTTNGCLAWGGGVNLAPADDIIINVERPVSIDPQPQLLASVMAKKIATGIKYTVIDIPVGKGVKIKNEAEGAKLARKFIELGESLNIKVECVLTYGGQPLGRAIGPALEAREAIEALQDPKNAPKSLIEKALSLAGILLELGGAAQIGEGQNLAWEILESGKALEKFNQIITEQGGTPKKPEEIELGDYVEEILAPIDGYITDISNTAITNVVKEAGAPRDKKAGILLNSKIGNKVKQGDVLYTIYSGSEERLVSAINLARRVYPVKVEGMLIERISKF</sequence>
<keyword id="KW-0328">Glycosyltransferase</keyword>
<keyword id="KW-0808">Transferase</keyword>
<protein>
    <recommendedName>
        <fullName evidence="1">AMP phosphorylase</fullName>
        <shortName evidence="1">AMPpase</shortName>
        <ecNumber evidence="1">2.4.2.57</ecNumber>
    </recommendedName>
    <alternativeName>
        <fullName evidence="1">Nucleoside monophosphate phosphorylase</fullName>
        <shortName evidence="1">NMP phosphorylase</shortName>
    </alternativeName>
</protein>
<feature type="chain" id="PRO_0000314723" description="AMP phosphorylase">
    <location>
        <begin position="1"/>
        <end position="505"/>
    </location>
</feature>
<feature type="active site" description="Proton donor" evidence="1">
    <location>
        <position position="258"/>
    </location>
</feature>
<feature type="binding site" evidence="1">
    <location>
        <position position="170"/>
    </location>
    <ligand>
        <name>AMP</name>
        <dbReference type="ChEBI" id="CHEBI:456215"/>
    </ligand>
</feature>
<feature type="binding site" evidence="1">
    <location>
        <begin position="196"/>
        <end position="201"/>
    </location>
    <ligand>
        <name>AMP</name>
        <dbReference type="ChEBI" id="CHEBI:456215"/>
    </ligand>
</feature>
<feature type="binding site" evidence="1">
    <location>
        <position position="205"/>
    </location>
    <ligand>
        <name>AMP</name>
        <dbReference type="ChEBI" id="CHEBI:456215"/>
    </ligand>
</feature>
<feature type="binding site" evidence="1">
    <location>
        <position position="266"/>
    </location>
    <ligand>
        <name>AMP</name>
        <dbReference type="ChEBI" id="CHEBI:456215"/>
    </ligand>
</feature>
<feature type="binding site" evidence="1">
    <location>
        <position position="290"/>
    </location>
    <ligand>
        <name>AMP</name>
        <dbReference type="ChEBI" id="CHEBI:456215"/>
    </ligand>
</feature>
<name>AMPPA_METM5</name>
<accession>A4FZL0</accession>
<organism>
    <name type="scientific">Methanococcus maripaludis (strain C5 / ATCC BAA-1333)</name>
    <dbReference type="NCBI Taxonomy" id="402880"/>
    <lineage>
        <taxon>Archaea</taxon>
        <taxon>Methanobacteriati</taxon>
        <taxon>Methanobacteriota</taxon>
        <taxon>Methanomada group</taxon>
        <taxon>Methanococci</taxon>
        <taxon>Methanococcales</taxon>
        <taxon>Methanococcaceae</taxon>
        <taxon>Methanococcus</taxon>
    </lineage>
</organism>
<reference key="1">
    <citation type="submission" date="2007-03" db="EMBL/GenBank/DDBJ databases">
        <title>Complete sequence of chromosome of Methanococcus maripaludis C5.</title>
        <authorList>
            <consortium name="US DOE Joint Genome Institute"/>
            <person name="Copeland A."/>
            <person name="Lucas S."/>
            <person name="Lapidus A."/>
            <person name="Barry K."/>
            <person name="Glavina del Rio T."/>
            <person name="Dalin E."/>
            <person name="Tice H."/>
            <person name="Pitluck S."/>
            <person name="Chertkov O."/>
            <person name="Brettin T."/>
            <person name="Bruce D."/>
            <person name="Han C."/>
            <person name="Detter J.C."/>
            <person name="Schmutz J."/>
            <person name="Larimer F."/>
            <person name="Land M."/>
            <person name="Hauser L."/>
            <person name="Kyrpides N."/>
            <person name="Mikhailova N."/>
            <person name="Sieprawska-Lupa M."/>
            <person name="Whitman W.B."/>
            <person name="Richardson P."/>
        </authorList>
    </citation>
    <scope>NUCLEOTIDE SEQUENCE [LARGE SCALE GENOMIC DNA]</scope>
    <source>
        <strain>C5 / ATCC BAA-1333</strain>
    </source>
</reference>